<protein>
    <recommendedName>
        <fullName evidence="1">Urease accessory protein UreF</fullName>
    </recommendedName>
</protein>
<name>UREF_PSEPW</name>
<sequence>MNSDLALLRLLQLASPGLPVGGFTYSQGLEWAVEAGWVRDIKSFSAWQREQMNDTLAYLDWPVLARLYYACKADDADAFARWSRFLLANRETAELRLEEQQRGAALARLLDGWQLGQAPAWRPSLELSQLGGMAWLAVHWSIPLRQLALGHAFAWLEGAVMAGVKLVPFGQQAAQTLLRDLGEILPGVIDQALALGDDQLGGGLPLLAIASSRHETQYTRLFRS</sequence>
<comment type="function">
    <text evidence="1">Required for maturation of urease via the functional incorporation of the urease nickel metallocenter.</text>
</comment>
<comment type="subunit">
    <text evidence="1">UreD, UreF and UreG form a complex that acts as a GTP-hydrolysis-dependent molecular chaperone, activating the urease apoprotein by helping to assemble the nickel containing metallocenter of UreC. The UreE protein probably delivers the nickel.</text>
</comment>
<comment type="subcellular location">
    <subcellularLocation>
        <location evidence="1">Cytoplasm</location>
    </subcellularLocation>
</comment>
<comment type="similarity">
    <text evidence="1">Belongs to the UreF family.</text>
</comment>
<keyword id="KW-0143">Chaperone</keyword>
<keyword id="KW-0963">Cytoplasm</keyword>
<keyword id="KW-0996">Nickel insertion</keyword>
<reference key="1">
    <citation type="submission" date="2008-02" db="EMBL/GenBank/DDBJ databases">
        <title>Complete sequence of Pseudomonas putida W619.</title>
        <authorList>
            <person name="Copeland A."/>
            <person name="Lucas S."/>
            <person name="Lapidus A."/>
            <person name="Barry K."/>
            <person name="Detter J.C."/>
            <person name="Glavina del Rio T."/>
            <person name="Dalin E."/>
            <person name="Tice H."/>
            <person name="Pitluck S."/>
            <person name="Chain P."/>
            <person name="Malfatti S."/>
            <person name="Shin M."/>
            <person name="Vergez L."/>
            <person name="Schmutz J."/>
            <person name="Larimer F."/>
            <person name="Land M."/>
            <person name="Hauser L."/>
            <person name="Kyrpides N."/>
            <person name="Kim E."/>
            <person name="Taghavi S."/>
            <person name="Vangronsveld D."/>
            <person name="van der Lelie D."/>
            <person name="Richardson P."/>
        </authorList>
    </citation>
    <scope>NUCLEOTIDE SEQUENCE [LARGE SCALE GENOMIC DNA]</scope>
    <source>
        <strain>W619</strain>
    </source>
</reference>
<evidence type="ECO:0000255" key="1">
    <source>
        <dbReference type="HAMAP-Rule" id="MF_01385"/>
    </source>
</evidence>
<proteinExistence type="inferred from homology"/>
<feature type="chain" id="PRO_0000344154" description="Urease accessory protein UreF">
    <location>
        <begin position="1"/>
        <end position="224"/>
    </location>
</feature>
<dbReference type="EMBL" id="CP000949">
    <property type="protein sequence ID" value="ACA72920.1"/>
    <property type="molecule type" value="Genomic_DNA"/>
</dbReference>
<dbReference type="SMR" id="B1J818"/>
<dbReference type="STRING" id="390235.PputW619_2420"/>
<dbReference type="KEGG" id="ppw:PputW619_2420"/>
<dbReference type="eggNOG" id="COG0830">
    <property type="taxonomic scope" value="Bacteria"/>
</dbReference>
<dbReference type="HOGENOM" id="CLU_049215_2_1_6"/>
<dbReference type="OrthoDB" id="9798772at2"/>
<dbReference type="GO" id="GO:0005737">
    <property type="term" value="C:cytoplasm"/>
    <property type="evidence" value="ECO:0007669"/>
    <property type="project" value="UniProtKB-SubCell"/>
</dbReference>
<dbReference type="GO" id="GO:0016151">
    <property type="term" value="F:nickel cation binding"/>
    <property type="evidence" value="ECO:0007669"/>
    <property type="project" value="UniProtKB-UniRule"/>
</dbReference>
<dbReference type="Gene3D" id="1.10.4190.10">
    <property type="entry name" value="Urease accessory protein UreF"/>
    <property type="match status" value="1"/>
</dbReference>
<dbReference type="HAMAP" id="MF_01385">
    <property type="entry name" value="UreF"/>
    <property type="match status" value="1"/>
</dbReference>
<dbReference type="InterPro" id="IPR002639">
    <property type="entry name" value="UreF"/>
</dbReference>
<dbReference type="InterPro" id="IPR038277">
    <property type="entry name" value="UreF_sf"/>
</dbReference>
<dbReference type="PANTHER" id="PTHR33620">
    <property type="entry name" value="UREASE ACCESSORY PROTEIN F"/>
    <property type="match status" value="1"/>
</dbReference>
<dbReference type="PANTHER" id="PTHR33620:SF1">
    <property type="entry name" value="UREASE ACCESSORY PROTEIN F"/>
    <property type="match status" value="1"/>
</dbReference>
<dbReference type="Pfam" id="PF01730">
    <property type="entry name" value="UreF"/>
    <property type="match status" value="1"/>
</dbReference>
<dbReference type="PIRSF" id="PIRSF009467">
    <property type="entry name" value="Ureas_acces_UreF"/>
    <property type="match status" value="1"/>
</dbReference>
<accession>B1J818</accession>
<gene>
    <name evidence="1" type="primary">ureF</name>
    <name type="ordered locus">PputW619_2420</name>
</gene>
<organism>
    <name type="scientific">Pseudomonas putida (strain W619)</name>
    <dbReference type="NCBI Taxonomy" id="390235"/>
    <lineage>
        <taxon>Bacteria</taxon>
        <taxon>Pseudomonadati</taxon>
        <taxon>Pseudomonadota</taxon>
        <taxon>Gammaproteobacteria</taxon>
        <taxon>Pseudomonadales</taxon>
        <taxon>Pseudomonadaceae</taxon>
        <taxon>Pseudomonas</taxon>
    </lineage>
</organism>